<dbReference type="EMBL" id="BC124262">
    <property type="protein sequence ID" value="AAI24263.1"/>
    <property type="molecule type" value="mRNA"/>
</dbReference>
<dbReference type="RefSeq" id="NP_001070634.1">
    <property type="nucleotide sequence ID" value="NM_001077166.1"/>
</dbReference>
<dbReference type="PDB" id="6HXV">
    <property type="method" value="X-ray"/>
    <property type="resolution" value="1.97 A"/>
    <property type="chains" value="A/B=1-168"/>
</dbReference>
<dbReference type="PDB" id="6HXY">
    <property type="method" value="X-ray"/>
    <property type="resolution" value="2.90 A"/>
    <property type="chains" value="A/B=1-170"/>
</dbReference>
<dbReference type="PDBsum" id="6HXV"/>
<dbReference type="PDBsum" id="6HXY"/>
<dbReference type="SMR" id="Q08CF3"/>
<dbReference type="FunCoup" id="Q08CF3">
    <property type="interactions" value="840"/>
</dbReference>
<dbReference type="STRING" id="7955.ENSDARP00000098205"/>
<dbReference type="PaxDb" id="7955-ENSDARP00000098205"/>
<dbReference type="GeneID" id="798766"/>
<dbReference type="KEGG" id="dre:798766"/>
<dbReference type="AGR" id="ZFIN:ZDB-GENE-060929-348"/>
<dbReference type="CTD" id="729440"/>
<dbReference type="ZFIN" id="ZDB-GENE-060929-348">
    <property type="gene designation" value="ccdc61"/>
</dbReference>
<dbReference type="eggNOG" id="ENOG502QRAS">
    <property type="taxonomic scope" value="Eukaryota"/>
</dbReference>
<dbReference type="InParanoid" id="Q08CF3"/>
<dbReference type="OrthoDB" id="568137at2759"/>
<dbReference type="PRO" id="PR:Q08CF3"/>
<dbReference type="Proteomes" id="UP000000437">
    <property type="component" value="Chromosome 21"/>
</dbReference>
<dbReference type="GO" id="GO:0034451">
    <property type="term" value="C:centriolar satellite"/>
    <property type="evidence" value="ECO:0000250"/>
    <property type="project" value="UniProtKB"/>
</dbReference>
<dbReference type="GO" id="GO:0120103">
    <property type="term" value="C:centriolar subdistal appendage"/>
    <property type="evidence" value="ECO:0000250"/>
    <property type="project" value="UniProtKB"/>
</dbReference>
<dbReference type="GO" id="GO:0005813">
    <property type="term" value="C:centrosome"/>
    <property type="evidence" value="ECO:0000250"/>
    <property type="project" value="UniProtKB"/>
</dbReference>
<dbReference type="GO" id="GO:0036064">
    <property type="term" value="C:ciliary basal body"/>
    <property type="evidence" value="ECO:0000250"/>
    <property type="project" value="UniProtKB"/>
</dbReference>
<dbReference type="GO" id="GO:0005737">
    <property type="term" value="C:cytoplasm"/>
    <property type="evidence" value="ECO:0007669"/>
    <property type="project" value="UniProtKB-KW"/>
</dbReference>
<dbReference type="GO" id="GO:0005815">
    <property type="term" value="C:microtubule organizing center"/>
    <property type="evidence" value="ECO:0000250"/>
    <property type="project" value="UniProtKB"/>
</dbReference>
<dbReference type="GO" id="GO:0042802">
    <property type="term" value="F:identical protein binding"/>
    <property type="evidence" value="ECO:0000315"/>
    <property type="project" value="UniProtKB"/>
</dbReference>
<dbReference type="GO" id="GO:0030030">
    <property type="term" value="P:cell projection organization"/>
    <property type="evidence" value="ECO:0007669"/>
    <property type="project" value="UniProtKB-KW"/>
</dbReference>
<dbReference type="GO" id="GO:0098534">
    <property type="term" value="P:centriole assembly"/>
    <property type="evidence" value="ECO:0000250"/>
    <property type="project" value="UniProtKB"/>
</dbReference>
<dbReference type="GO" id="GO:0090307">
    <property type="term" value="P:mitotic spindle assembly"/>
    <property type="evidence" value="ECO:0000250"/>
    <property type="project" value="UniProtKB"/>
</dbReference>
<dbReference type="CDD" id="cd22284">
    <property type="entry name" value="HD_CCDC61_N"/>
    <property type="match status" value="1"/>
</dbReference>
<dbReference type="InterPro" id="IPR049733">
    <property type="entry name" value="CCDC61_N"/>
</dbReference>
<dbReference type="PANTHER" id="PTHR22691:SF1">
    <property type="entry name" value="CENTROSOMAL PROTEIN CCDC61"/>
    <property type="match status" value="1"/>
</dbReference>
<dbReference type="PANTHER" id="PTHR22691">
    <property type="entry name" value="YEAST SPT2-RELATED"/>
    <property type="match status" value="1"/>
</dbReference>
<reference key="1">
    <citation type="submission" date="2006-09" db="EMBL/GenBank/DDBJ databases">
        <authorList>
            <consortium name="NIH - Zebrafish Gene Collection (ZGC) project"/>
        </authorList>
    </citation>
    <scope>NUCLEOTIDE SEQUENCE [LARGE SCALE MRNA]</scope>
    <source>
        <tissue>Olfactory epithelium</tissue>
    </source>
</reference>
<reference evidence="7 8" key="2">
    <citation type="journal article" date="2020" name="Structure">
        <title>CCDC61/VFL3 Is a Paralog of SAS6 and Promotes Ciliary Functions.</title>
        <authorList>
            <person name="Ochi T."/>
            <person name="Quarantotti V."/>
            <person name="Lin H."/>
            <person name="Jullien J."/>
            <person name="Rosa e Silva I."/>
            <person name="Boselli F."/>
            <person name="Barnabas D.D."/>
            <person name="Johnson C.M."/>
            <person name="McLaughlin S.H."/>
            <person name="Freund S.M.V."/>
            <person name="Blackford A.N."/>
            <person name="Kimata Y."/>
            <person name="Goldstein R.E."/>
            <person name="Jackson S.P."/>
            <person name="Blundell T.L."/>
            <person name="Dutcher S.K."/>
            <person name="Gergely F."/>
            <person name="van Breugel M."/>
        </authorList>
    </citation>
    <scope>X-RAY CRYSTALLOGRAPHY (1.97 ANGSTROMS) OF 1-168</scope>
    <scope>MUTAGENESIS OF 129-PHE-ASP-130</scope>
    <scope>SUBUNIT</scope>
</reference>
<protein>
    <recommendedName>
        <fullName evidence="5">Centrosomal protein CCDC61</fullName>
    </recommendedName>
    <alternativeName>
        <fullName evidence="1">Coiled-coil domain-containing protein 61</fullName>
    </alternativeName>
    <alternativeName>
        <fullName evidence="1">VFL3 homolog</fullName>
    </alternativeName>
</protein>
<keyword id="KW-0002">3D-structure</keyword>
<keyword id="KW-0966">Cell projection</keyword>
<keyword id="KW-0970">Cilium biogenesis/degradation</keyword>
<keyword id="KW-0175">Coiled coil</keyword>
<keyword id="KW-0963">Cytoplasm</keyword>
<keyword id="KW-0206">Cytoskeleton</keyword>
<keyword id="KW-1185">Reference proteome</keyword>
<organism>
    <name type="scientific">Danio rerio</name>
    <name type="common">Zebrafish</name>
    <name type="synonym">Brachydanio rerio</name>
    <dbReference type="NCBI Taxonomy" id="7955"/>
    <lineage>
        <taxon>Eukaryota</taxon>
        <taxon>Metazoa</taxon>
        <taxon>Chordata</taxon>
        <taxon>Craniata</taxon>
        <taxon>Vertebrata</taxon>
        <taxon>Euteleostomi</taxon>
        <taxon>Actinopterygii</taxon>
        <taxon>Neopterygii</taxon>
        <taxon>Teleostei</taxon>
        <taxon>Ostariophysi</taxon>
        <taxon>Cypriniformes</taxon>
        <taxon>Danionidae</taxon>
        <taxon>Danioninae</taxon>
        <taxon>Danio</taxon>
    </lineage>
</organism>
<proteinExistence type="evidence at protein level"/>
<comment type="function">
    <text evidence="1">Microtubule-binding centrosomal protein required for centriole cohesion, independently of the centrosome-associated protein/CEP250 and rootletin/CROCC linker. In interphase, required for anchoring microtubule at the mother centriole subdistal appendages and for centrosome positioning. During mitosis, may be involved in spindle assembly and chromatin alignment by regulating the organization of spindle microtubules into a symmetrical structure. Plays a non-essential role in ciliogenesis.</text>
</comment>
<comment type="subunit">
    <text evidence="4">Forms homodimers (via head domain).</text>
</comment>
<comment type="subcellular location">
    <subcellularLocation>
        <location evidence="1">Cytoplasm</location>
        <location evidence="1">Cytoskeleton</location>
        <location evidence="1">Microtubule organizing center</location>
        <location evidence="1">Centrosome</location>
    </subcellularLocation>
    <subcellularLocation>
        <location evidence="1">Cytoplasm</location>
        <location evidence="1">Cytoskeleton</location>
        <location evidence="1">Microtubule organizing center</location>
        <location evidence="1">Centrosome</location>
        <location evidence="1">Centriolar satellite</location>
    </subcellularLocation>
    <subcellularLocation>
        <location evidence="1">Cytoplasm</location>
        <location evidence="1">Cytoskeleton</location>
        <location evidence="1">Cilium basal body</location>
    </subcellularLocation>
    <text evidence="1">Localization at the centriolar satellite is dependent on intact microtubule network. Localizes at the centriole subdistal appendages and proximal ends. Localized to centrosomal/satellite-like structures with the onset of centrosome separation in early G2.</text>
</comment>
<comment type="domain">
    <text evidence="1">The coiled-coil domain is involved in microtubule-binding.</text>
</comment>
<comment type="miscellaneous">
    <text evidence="1">The N-terminal 3D structure (head domain) resembles that of NHEJ1/XLF, PAXX, SASS6 and XRCC4.</text>
</comment>
<comment type="similarity">
    <text evidence="6">Belongs to the CCDC61 family.</text>
</comment>
<sequence length="511" mass="57554">MEVGTVVQEEMKFRGSEFAVKVEMAERLLIVEISDVVTADQWRGEFGPAYIEDLTRKTGNFKQFPVFCSMLESAVHKSSDSVTLDLLTYSDLELLRNRKAGVVGRPRAQPQSPALSAKRYLILIYTVEFDRIHYPLPLPYLGKPDPAELQKEIRALRSELKTLGLRGDHKVSDQETRKLRTELALVRDEKEALAKALDRLQMVGSGSAPGARGLREAVHSLEEQLLKERAKSQRSAIKKSQEQRLLVEQLEELRASERALRIRVKSLTTELALLRRGRATPVLSDRGGLRGDGVVHRSLSRERSLTRVGIRARSGSRERIEDRGRRSEERVRRADSSGSRNCITRPSPSPTGSRVPRFDPTAYIQDRQRRQKEAELKSQRKIRRDMLASPSLMERGRSRSREPVPQLMRAGSAGRGRSVSVESRRSRCSSEGSVAEFEELAKPLNSRGRKLMSNGPAVSRGRHINKKPMCSTPAQRMRAGDTSMDTGADLSEIDARLQALQDYMRDLDTGH</sequence>
<accession>Q08CF3</accession>
<feature type="chain" id="PRO_0000311259" description="Centrosomal protein CCDC61">
    <location>
        <begin position="1"/>
        <end position="511"/>
    </location>
</feature>
<feature type="region of interest" description="Head domain" evidence="1">
    <location>
        <begin position="1"/>
        <end position="144"/>
    </location>
</feature>
<feature type="region of interest" description="Disordered" evidence="3">
    <location>
        <begin position="306"/>
        <end position="403"/>
    </location>
</feature>
<feature type="region of interest" description="Disordered" evidence="3">
    <location>
        <begin position="447"/>
        <end position="486"/>
    </location>
</feature>
<feature type="coiled-coil region" evidence="2">
    <location>
        <begin position="147"/>
        <end position="272"/>
    </location>
</feature>
<feature type="compositionally biased region" description="Basic and acidic residues" evidence="3">
    <location>
        <begin position="315"/>
        <end position="335"/>
    </location>
</feature>
<feature type="compositionally biased region" description="Polar residues" evidence="3">
    <location>
        <begin position="338"/>
        <end position="352"/>
    </location>
</feature>
<feature type="compositionally biased region" description="Basic and acidic residues" evidence="3">
    <location>
        <begin position="366"/>
        <end position="378"/>
    </location>
</feature>
<feature type="mutagenesis site" description="Abolishes dimerization." evidence="4">
    <original>FD</original>
    <variation>EA</variation>
    <location>
        <begin position="129"/>
        <end position="130"/>
    </location>
</feature>
<feature type="strand" evidence="9">
    <location>
        <begin position="6"/>
        <end position="13"/>
    </location>
</feature>
<feature type="strand" evidence="9">
    <location>
        <begin position="16"/>
        <end position="25"/>
    </location>
</feature>
<feature type="strand" evidence="9">
    <location>
        <begin position="28"/>
        <end position="35"/>
    </location>
</feature>
<feature type="turn" evidence="9">
    <location>
        <begin position="36"/>
        <end position="38"/>
    </location>
</feature>
<feature type="strand" evidence="9">
    <location>
        <begin position="41"/>
        <end position="46"/>
    </location>
</feature>
<feature type="helix" evidence="9">
    <location>
        <begin position="48"/>
        <end position="58"/>
    </location>
</feature>
<feature type="helix" evidence="9">
    <location>
        <begin position="64"/>
        <end position="76"/>
    </location>
</feature>
<feature type="strand" evidence="9">
    <location>
        <begin position="82"/>
        <end position="87"/>
    </location>
</feature>
<feature type="helix" evidence="9">
    <location>
        <begin position="89"/>
        <end position="99"/>
    </location>
</feature>
<feature type="helix" evidence="9">
    <location>
        <begin position="113"/>
        <end position="117"/>
    </location>
</feature>
<feature type="strand" evidence="9">
    <location>
        <begin position="119"/>
        <end position="127"/>
    </location>
</feature>
<feature type="strand" evidence="9">
    <location>
        <begin position="130"/>
        <end position="138"/>
    </location>
</feature>
<feature type="strand" evidence="9">
    <location>
        <begin position="140"/>
        <end position="142"/>
    </location>
</feature>
<feature type="helix" evidence="9">
    <location>
        <begin position="146"/>
        <end position="163"/>
    </location>
</feature>
<name>CCD61_DANRE</name>
<evidence type="ECO:0000250" key="1">
    <source>
        <dbReference type="UniProtKB" id="Q9Y6R9"/>
    </source>
</evidence>
<evidence type="ECO:0000255" key="2"/>
<evidence type="ECO:0000256" key="3">
    <source>
        <dbReference type="SAM" id="MobiDB-lite"/>
    </source>
</evidence>
<evidence type="ECO:0000269" key="4">
    <source>
    </source>
</evidence>
<evidence type="ECO:0000303" key="5">
    <source>
    </source>
</evidence>
<evidence type="ECO:0000305" key="6"/>
<evidence type="ECO:0007744" key="7">
    <source>
        <dbReference type="PDB" id="6HXV"/>
    </source>
</evidence>
<evidence type="ECO:0007744" key="8">
    <source>
        <dbReference type="PDB" id="6HXY"/>
    </source>
</evidence>
<evidence type="ECO:0007829" key="9">
    <source>
        <dbReference type="PDB" id="6HXV"/>
    </source>
</evidence>
<gene>
    <name evidence="1" type="primary">ccdc61</name>
    <name type="ORF">zgc:153153</name>
</gene>